<feature type="chain" id="PRO_1000165576" description="Small ribosomal subunit protein uS11">
    <location>
        <begin position="1"/>
        <end position="139"/>
    </location>
</feature>
<feature type="region of interest" description="Disordered" evidence="2">
    <location>
        <begin position="117"/>
        <end position="139"/>
    </location>
</feature>
<reference key="1">
    <citation type="journal article" date="2008" name="J. Bacteriol.">
        <title>The complete genome sequence of Thermococcus onnurineus NA1 reveals a mixed heterotrophic and carboxydotrophic metabolism.</title>
        <authorList>
            <person name="Lee H.S."/>
            <person name="Kang S.G."/>
            <person name="Bae S.S."/>
            <person name="Lim J.K."/>
            <person name="Cho Y."/>
            <person name="Kim Y.J."/>
            <person name="Jeon J.H."/>
            <person name="Cha S.-S."/>
            <person name="Kwon K.K."/>
            <person name="Kim H.-T."/>
            <person name="Park C.-J."/>
            <person name="Lee H.-W."/>
            <person name="Kim S.I."/>
            <person name="Chun J."/>
            <person name="Colwell R.R."/>
            <person name="Kim S.-J."/>
            <person name="Lee J.-H."/>
        </authorList>
    </citation>
    <scope>NUCLEOTIDE SEQUENCE [LARGE SCALE GENOMIC DNA]</scope>
    <source>
        <strain>NA1</strain>
    </source>
</reference>
<name>RS11_THEON</name>
<protein>
    <recommendedName>
        <fullName evidence="1">Small ribosomal subunit protein uS11</fullName>
    </recommendedName>
    <alternativeName>
        <fullName evidence="3">30S ribosomal protein S11</fullName>
    </alternativeName>
</protein>
<sequence>MSEEQQVVNLKKKEKWGVAHIYSSYNNTIIHITDLTGAETVSRWSGGMVVKADRDEPSPYAAMIAAKRAAEEAMEKGFVGVHIKVRAPGGSKSKTPGPGAQAAIRALARAGLRIGRVEDVTPIPHDGTRPKGGRRGRRV</sequence>
<organism>
    <name type="scientific">Thermococcus onnurineus (strain NA1)</name>
    <dbReference type="NCBI Taxonomy" id="523850"/>
    <lineage>
        <taxon>Archaea</taxon>
        <taxon>Methanobacteriati</taxon>
        <taxon>Methanobacteriota</taxon>
        <taxon>Thermococci</taxon>
        <taxon>Thermococcales</taxon>
        <taxon>Thermococcaceae</taxon>
        <taxon>Thermococcus</taxon>
    </lineage>
</organism>
<gene>
    <name evidence="1" type="primary">rps11</name>
    <name type="ordered locus">TON_0104</name>
</gene>
<comment type="function">
    <text evidence="1">Located on the platform of the 30S subunit.</text>
</comment>
<comment type="subunit">
    <text evidence="1">Part of the 30S ribosomal subunit.</text>
</comment>
<comment type="similarity">
    <text evidence="1">Belongs to the universal ribosomal protein uS11 family.</text>
</comment>
<evidence type="ECO:0000255" key="1">
    <source>
        <dbReference type="HAMAP-Rule" id="MF_01310"/>
    </source>
</evidence>
<evidence type="ECO:0000256" key="2">
    <source>
        <dbReference type="SAM" id="MobiDB-lite"/>
    </source>
</evidence>
<evidence type="ECO:0000305" key="3"/>
<accession>B6YSQ2</accession>
<proteinExistence type="inferred from homology"/>
<keyword id="KW-0687">Ribonucleoprotein</keyword>
<keyword id="KW-0689">Ribosomal protein</keyword>
<keyword id="KW-0694">RNA-binding</keyword>
<keyword id="KW-0699">rRNA-binding</keyword>
<dbReference type="EMBL" id="CP000855">
    <property type="protein sequence ID" value="ACJ15589.1"/>
    <property type="molecule type" value="Genomic_DNA"/>
</dbReference>
<dbReference type="RefSeq" id="WP_012571062.1">
    <property type="nucleotide sequence ID" value="NC_011529.1"/>
</dbReference>
<dbReference type="SMR" id="B6YSQ2"/>
<dbReference type="STRING" id="523850.TON_0104"/>
<dbReference type="GeneID" id="7017752"/>
<dbReference type="KEGG" id="ton:TON_0104"/>
<dbReference type="PATRIC" id="fig|523850.10.peg.104"/>
<dbReference type="eggNOG" id="arCOG04240">
    <property type="taxonomic scope" value="Archaea"/>
</dbReference>
<dbReference type="HOGENOM" id="CLU_072439_6_1_2"/>
<dbReference type="OrthoDB" id="12054at2157"/>
<dbReference type="Proteomes" id="UP000002727">
    <property type="component" value="Chromosome"/>
</dbReference>
<dbReference type="GO" id="GO:1990904">
    <property type="term" value="C:ribonucleoprotein complex"/>
    <property type="evidence" value="ECO:0007669"/>
    <property type="project" value="UniProtKB-KW"/>
</dbReference>
<dbReference type="GO" id="GO:0005840">
    <property type="term" value="C:ribosome"/>
    <property type="evidence" value="ECO:0007669"/>
    <property type="project" value="UniProtKB-KW"/>
</dbReference>
<dbReference type="GO" id="GO:0019843">
    <property type="term" value="F:rRNA binding"/>
    <property type="evidence" value="ECO:0007669"/>
    <property type="project" value="UniProtKB-UniRule"/>
</dbReference>
<dbReference type="GO" id="GO:0003735">
    <property type="term" value="F:structural constituent of ribosome"/>
    <property type="evidence" value="ECO:0007669"/>
    <property type="project" value="InterPro"/>
</dbReference>
<dbReference type="GO" id="GO:0006412">
    <property type="term" value="P:translation"/>
    <property type="evidence" value="ECO:0007669"/>
    <property type="project" value="UniProtKB-UniRule"/>
</dbReference>
<dbReference type="FunFam" id="3.30.420.80:FF:000007">
    <property type="entry name" value="30S ribosomal protein S11"/>
    <property type="match status" value="1"/>
</dbReference>
<dbReference type="Gene3D" id="3.30.420.80">
    <property type="entry name" value="Ribosomal protein S11"/>
    <property type="match status" value="1"/>
</dbReference>
<dbReference type="HAMAP" id="MF_01310">
    <property type="entry name" value="Ribosomal_uS11"/>
    <property type="match status" value="1"/>
</dbReference>
<dbReference type="InterPro" id="IPR001971">
    <property type="entry name" value="Ribosomal_uS11"/>
</dbReference>
<dbReference type="InterPro" id="IPR019961">
    <property type="entry name" value="Ribosomal_uS11_archaeal"/>
</dbReference>
<dbReference type="InterPro" id="IPR018102">
    <property type="entry name" value="Ribosomal_uS11_CS"/>
</dbReference>
<dbReference type="InterPro" id="IPR036967">
    <property type="entry name" value="Ribosomal_uS11_sf"/>
</dbReference>
<dbReference type="NCBIfam" id="TIGR03628">
    <property type="entry name" value="arch_S11P"/>
    <property type="match status" value="1"/>
</dbReference>
<dbReference type="NCBIfam" id="NF007176">
    <property type="entry name" value="PRK09607.1"/>
    <property type="match status" value="1"/>
</dbReference>
<dbReference type="PANTHER" id="PTHR11759">
    <property type="entry name" value="40S RIBOSOMAL PROTEIN S14/30S RIBOSOMAL PROTEIN S11"/>
    <property type="match status" value="1"/>
</dbReference>
<dbReference type="Pfam" id="PF00411">
    <property type="entry name" value="Ribosomal_S11"/>
    <property type="match status" value="1"/>
</dbReference>
<dbReference type="PIRSF" id="PIRSF002131">
    <property type="entry name" value="Ribosomal_S11"/>
    <property type="match status" value="1"/>
</dbReference>
<dbReference type="SUPFAM" id="SSF53137">
    <property type="entry name" value="Translational machinery components"/>
    <property type="match status" value="1"/>
</dbReference>
<dbReference type="PROSITE" id="PS00054">
    <property type="entry name" value="RIBOSOMAL_S11"/>
    <property type="match status" value="1"/>
</dbReference>